<reference key="1">
    <citation type="submission" date="2005-10" db="EMBL/GenBank/DDBJ databases">
        <title>Complete sequence of chromosome 1 of Burkholderia sp. 383.</title>
        <authorList>
            <consortium name="US DOE Joint Genome Institute"/>
            <person name="Copeland A."/>
            <person name="Lucas S."/>
            <person name="Lapidus A."/>
            <person name="Barry K."/>
            <person name="Detter J.C."/>
            <person name="Glavina T."/>
            <person name="Hammon N."/>
            <person name="Israni S."/>
            <person name="Pitluck S."/>
            <person name="Chain P."/>
            <person name="Malfatti S."/>
            <person name="Shin M."/>
            <person name="Vergez L."/>
            <person name="Schmutz J."/>
            <person name="Larimer F."/>
            <person name="Land M."/>
            <person name="Kyrpides N."/>
            <person name="Lykidis A."/>
            <person name="Richardson P."/>
        </authorList>
    </citation>
    <scope>NUCLEOTIDE SEQUENCE [LARGE SCALE GENOMIC DNA]</scope>
    <source>
        <strain>ATCC 17760 / DSM 23089 / LMG 22485 / NCIMB 9086 / R18194 / 383</strain>
    </source>
</reference>
<evidence type="ECO:0000255" key="1">
    <source>
        <dbReference type="HAMAP-Rule" id="MF_00514"/>
    </source>
</evidence>
<evidence type="ECO:0000305" key="2"/>
<protein>
    <recommendedName>
        <fullName evidence="1">Large ribosomal subunit protein bL35</fullName>
    </recommendedName>
    <alternativeName>
        <fullName evidence="2">50S ribosomal protein L35</fullName>
    </alternativeName>
</protein>
<proteinExistence type="inferred from homology"/>
<feature type="chain" id="PRO_0000258650" description="Large ribosomal subunit protein bL35">
    <location>
        <begin position="1"/>
        <end position="65"/>
    </location>
</feature>
<name>RL35_BURL3</name>
<dbReference type="EMBL" id="CP000151">
    <property type="protein sequence ID" value="ABB08213.1"/>
    <property type="molecule type" value="Genomic_DNA"/>
</dbReference>
<dbReference type="RefSeq" id="WP_004191477.1">
    <property type="nucleotide sequence ID" value="NZ_WNDV01000032.1"/>
</dbReference>
<dbReference type="SMR" id="Q39H53"/>
<dbReference type="GeneID" id="98102115"/>
<dbReference type="KEGG" id="bur:Bcep18194_A4617"/>
<dbReference type="HOGENOM" id="CLU_169643_1_0_4"/>
<dbReference type="Proteomes" id="UP000002705">
    <property type="component" value="Chromosome 1"/>
</dbReference>
<dbReference type="GO" id="GO:0022625">
    <property type="term" value="C:cytosolic large ribosomal subunit"/>
    <property type="evidence" value="ECO:0007669"/>
    <property type="project" value="TreeGrafter"/>
</dbReference>
<dbReference type="GO" id="GO:0003735">
    <property type="term" value="F:structural constituent of ribosome"/>
    <property type="evidence" value="ECO:0007669"/>
    <property type="project" value="InterPro"/>
</dbReference>
<dbReference type="GO" id="GO:0006412">
    <property type="term" value="P:translation"/>
    <property type="evidence" value="ECO:0007669"/>
    <property type="project" value="UniProtKB-UniRule"/>
</dbReference>
<dbReference type="FunFam" id="4.10.410.60:FF:000001">
    <property type="entry name" value="50S ribosomal protein L35"/>
    <property type="match status" value="1"/>
</dbReference>
<dbReference type="Gene3D" id="4.10.410.60">
    <property type="match status" value="1"/>
</dbReference>
<dbReference type="HAMAP" id="MF_00514">
    <property type="entry name" value="Ribosomal_bL35"/>
    <property type="match status" value="1"/>
</dbReference>
<dbReference type="InterPro" id="IPR001706">
    <property type="entry name" value="Ribosomal_bL35"/>
</dbReference>
<dbReference type="InterPro" id="IPR021137">
    <property type="entry name" value="Ribosomal_bL35-like"/>
</dbReference>
<dbReference type="InterPro" id="IPR018265">
    <property type="entry name" value="Ribosomal_bL35_CS"/>
</dbReference>
<dbReference type="InterPro" id="IPR037229">
    <property type="entry name" value="Ribosomal_bL35_sf"/>
</dbReference>
<dbReference type="NCBIfam" id="TIGR00001">
    <property type="entry name" value="rpmI_bact"/>
    <property type="match status" value="1"/>
</dbReference>
<dbReference type="PANTHER" id="PTHR33343">
    <property type="entry name" value="54S RIBOSOMAL PROTEIN BL35M"/>
    <property type="match status" value="1"/>
</dbReference>
<dbReference type="PANTHER" id="PTHR33343:SF1">
    <property type="entry name" value="LARGE RIBOSOMAL SUBUNIT PROTEIN BL35M"/>
    <property type="match status" value="1"/>
</dbReference>
<dbReference type="Pfam" id="PF01632">
    <property type="entry name" value="Ribosomal_L35p"/>
    <property type="match status" value="1"/>
</dbReference>
<dbReference type="PRINTS" id="PR00064">
    <property type="entry name" value="RIBOSOMALL35"/>
</dbReference>
<dbReference type="SUPFAM" id="SSF143034">
    <property type="entry name" value="L35p-like"/>
    <property type="match status" value="1"/>
</dbReference>
<dbReference type="PROSITE" id="PS00936">
    <property type="entry name" value="RIBOSOMAL_L35"/>
    <property type="match status" value="1"/>
</dbReference>
<accession>Q39H53</accession>
<keyword id="KW-0687">Ribonucleoprotein</keyword>
<keyword id="KW-0689">Ribosomal protein</keyword>
<comment type="similarity">
    <text evidence="1">Belongs to the bacterial ribosomal protein bL35 family.</text>
</comment>
<gene>
    <name evidence="1" type="primary">rpmI</name>
    <name type="ordered locus">Bcep18194_A4617</name>
</gene>
<organism>
    <name type="scientific">Burkholderia lata (strain ATCC 17760 / DSM 23089 / LMG 22485 / NCIMB 9086 / R18194 / 383)</name>
    <dbReference type="NCBI Taxonomy" id="482957"/>
    <lineage>
        <taxon>Bacteria</taxon>
        <taxon>Pseudomonadati</taxon>
        <taxon>Pseudomonadota</taxon>
        <taxon>Betaproteobacteria</taxon>
        <taxon>Burkholderiales</taxon>
        <taxon>Burkholderiaceae</taxon>
        <taxon>Burkholderia</taxon>
        <taxon>Burkholderia cepacia complex</taxon>
    </lineage>
</organism>
<sequence length="65" mass="7301">MPKMKTKKSAAKRFVVRPGGTVKRGQAFKRHILTKKTTKNKRHLRGATAVHDSDLNSVRAMLPFA</sequence>